<gene>
    <name type="primary">yubM</name>
    <name type="ordered locus">L7086</name>
    <name type="ordered locus">ECO57PM50</name>
</gene>
<protein>
    <recommendedName>
        <fullName>Uncharacterized protein YubM</fullName>
    </recommendedName>
</protein>
<name>YUBM_ECO57</name>
<feature type="chain" id="PRO_0000262307" description="Uncharacterized protein YubM">
    <location>
        <begin position="1"/>
        <end position="652"/>
    </location>
</feature>
<feature type="region of interest" description="Disordered" evidence="1">
    <location>
        <begin position="1"/>
        <end position="21"/>
    </location>
</feature>
<feature type="region of interest" description="Disordered" evidence="1">
    <location>
        <begin position="628"/>
        <end position="652"/>
    </location>
</feature>
<feature type="compositionally biased region" description="Basic and acidic residues" evidence="1">
    <location>
        <begin position="1"/>
        <end position="13"/>
    </location>
</feature>
<feature type="compositionally biased region" description="Basic and acidic residues" evidence="1">
    <location>
        <begin position="641"/>
        <end position="652"/>
    </location>
</feature>
<reference key="1">
    <citation type="journal article" date="1998" name="Nucleic Acids Res.">
        <title>The complete DNA sequence and analysis of the large virulence plasmid of Escherichia coli O157:H7.</title>
        <authorList>
            <person name="Burland V."/>
            <person name="Shao Y."/>
            <person name="Perna N.T."/>
            <person name="Plunkett G. III"/>
            <person name="Sofia H.J."/>
            <person name="Blattner F.R."/>
        </authorList>
    </citation>
    <scope>NUCLEOTIDE SEQUENCE [LARGE SCALE GENOMIC DNA]</scope>
    <source>
        <strain>O157:H7 / EDL933 / ATCC 700927 / EHEC</strain>
    </source>
</reference>
<reference key="2">
    <citation type="journal article" date="1998" name="DNA Res.">
        <title>Complete nucleotide sequences of 93-kb and 3.3-kb plasmids of an enterohemorrhagic Escherichia coli O157:H7 derived from Sakai outbreak.</title>
        <authorList>
            <person name="Makino K."/>
            <person name="Ishii K."/>
            <person name="Yasunaga T."/>
            <person name="Hattori M."/>
            <person name="Yokoyama K."/>
            <person name="Yatsudo H.C."/>
            <person name="Kubota Y."/>
            <person name="Yamaichi Y."/>
            <person name="Iida T."/>
            <person name="Yamamoto K."/>
            <person name="Honda T."/>
            <person name="Han C.G."/>
            <person name="Ohtsubo A."/>
            <person name="Kasamatsu M."/>
            <person name="Hayashi T."/>
            <person name="Kuhara S."/>
            <person name="Shinagawa H."/>
        </authorList>
    </citation>
    <scope>NUCLEOTIDE SEQUENCE [LARGE SCALE GENOMIC DNA]</scope>
    <source>
        <strain>O157:H7 / Sakai / RIMD 0509952 / EHEC</strain>
    </source>
</reference>
<proteinExistence type="inferred from homology"/>
<comment type="similarity">
    <text evidence="2">Belongs to the ParB family.</text>
</comment>
<comment type="sequence caution" evidence="2">
    <conflict type="erroneous initiation">
        <sequence resource="EMBL-CDS" id="AAC70154"/>
    </conflict>
</comment>
<keyword id="KW-0614">Plasmid</keyword>
<keyword id="KW-1185">Reference proteome</keyword>
<evidence type="ECO:0000256" key="1">
    <source>
        <dbReference type="SAM" id="MobiDB-lite"/>
    </source>
</evidence>
<evidence type="ECO:0000305" key="2"/>
<sequence length="652" mass="71657">MSVTESKAKTERKSSRKPAKTQETVLSALLAQTEEVSVPLASLIKSPLNVRTVPYSAESVSELADSIKGVGLLQNLVVHALPGDRYGVAAGGRRLAALNMLAERDIIPADWPVRVKVIPQELATAASMTENGHRRDMHPAEQIAGFRAMAQEGKTPAQIGDLLGYSPRHVQRMLKLADLAPVILDALAEDRITTEHCQALALENDTARQVQVFEAACQSGWGGKPEVQTIRRLVTESEVAVAGNSKFRFVGADTFSPDELRTDLFSDDEGGYVDCVALDAALLEKLQAVAEHLREAEGWEWCAGRMEPVGFCREDAGTYRSLPEPEAVLTEAEEERLNELMARYDALENQCEESDLLEAEMKLMRCMAKVRAWTPEMRAGSGVVVSWRYGNVCVQRGVQLRSEDDVADNDYRTEQVQEKASVEEISLPLLTKMSSERTLAVQAALMQQSDKSLALLAWTLCLNVFGSGAYSNPARIRLECEHYSLTSDAPSGKEGAAFMAMMAEKARLAALLPDGWARDMTTFLSLSQEVLLSLLSFCTACSIHGVQTREYGHTSRSPLDTLESAIGFHMRDWWQPTKANFFGHLKKPQIIAALNEAGLSGAARDAEKMKKGDAAEHAEHHMKDNRWVPGWMCAPRPQTDATERTDNLADAA</sequence>
<geneLocation type="plasmid">
    <name>pO157</name>
</geneLocation>
<accession>Q9ZGR8</accession>
<accession>O82909</accession>
<dbReference type="EMBL" id="AF074613">
    <property type="protein sequence ID" value="AAC70154.1"/>
    <property type="status" value="ALT_INIT"/>
    <property type="molecule type" value="Genomic_DNA"/>
</dbReference>
<dbReference type="EMBL" id="AB011549">
    <property type="protein sequence ID" value="BAA31807.1"/>
    <property type="molecule type" value="Genomic_DNA"/>
</dbReference>
<dbReference type="PIR" id="T42186">
    <property type="entry name" value="T42186"/>
</dbReference>
<dbReference type="RefSeq" id="NP_052657.1">
    <property type="nucleotide sequence ID" value="NC_002128.1"/>
</dbReference>
<dbReference type="RefSeq" id="WP_000117168.1">
    <property type="nucleotide sequence ID" value="NZ_VOAI01000060.1"/>
</dbReference>
<dbReference type="SMR" id="Q9ZGR8"/>
<dbReference type="KEGG" id="ece:Z_L7086"/>
<dbReference type="KEGG" id="ecs:pO157p50"/>
<dbReference type="PATRIC" id="fig|386585.9.peg.58"/>
<dbReference type="eggNOG" id="COG1475">
    <property type="taxonomic scope" value="Bacteria"/>
</dbReference>
<dbReference type="HOGENOM" id="CLU_019174_3_0_6"/>
<dbReference type="OMA" id="RNVRTTP"/>
<dbReference type="Proteomes" id="UP000000558">
    <property type="component" value="Plasmid pO157"/>
</dbReference>
<dbReference type="Proteomes" id="UP000002519">
    <property type="component" value="Plasmid pO157"/>
</dbReference>
<dbReference type="GO" id="GO:0005694">
    <property type="term" value="C:chromosome"/>
    <property type="evidence" value="ECO:0007669"/>
    <property type="project" value="TreeGrafter"/>
</dbReference>
<dbReference type="GO" id="GO:0003677">
    <property type="term" value="F:DNA binding"/>
    <property type="evidence" value="ECO:0007669"/>
    <property type="project" value="InterPro"/>
</dbReference>
<dbReference type="GO" id="GO:0007059">
    <property type="term" value="P:chromosome segregation"/>
    <property type="evidence" value="ECO:0007669"/>
    <property type="project" value="TreeGrafter"/>
</dbReference>
<dbReference type="CDD" id="cd16406">
    <property type="entry name" value="ParB_N_like"/>
    <property type="match status" value="1"/>
</dbReference>
<dbReference type="FunFam" id="1.10.10.2830:FF:000001">
    <property type="entry name" value="Chromosome partitioning protein ParB"/>
    <property type="match status" value="1"/>
</dbReference>
<dbReference type="Gene3D" id="1.10.10.2830">
    <property type="match status" value="1"/>
</dbReference>
<dbReference type="Gene3D" id="3.90.1530.30">
    <property type="match status" value="1"/>
</dbReference>
<dbReference type="InterPro" id="IPR050336">
    <property type="entry name" value="Chromosome_partition/occlusion"/>
</dbReference>
<dbReference type="InterPro" id="IPR004437">
    <property type="entry name" value="ParB/RepB/Spo0J"/>
</dbReference>
<dbReference type="InterPro" id="IPR003115">
    <property type="entry name" value="ParB/Sulfiredoxin_dom"/>
</dbReference>
<dbReference type="InterPro" id="IPR036086">
    <property type="entry name" value="ParB/Sulfiredoxin_sf"/>
</dbReference>
<dbReference type="NCBIfam" id="TIGR00180">
    <property type="entry name" value="parB_part"/>
    <property type="match status" value="1"/>
</dbReference>
<dbReference type="PANTHER" id="PTHR33375:SF7">
    <property type="entry name" value="CHROMOSOME 2-PARTITIONING PROTEIN PARB-RELATED"/>
    <property type="match status" value="1"/>
</dbReference>
<dbReference type="PANTHER" id="PTHR33375">
    <property type="entry name" value="CHROMOSOME-PARTITIONING PROTEIN PARB-RELATED"/>
    <property type="match status" value="1"/>
</dbReference>
<dbReference type="Pfam" id="PF02195">
    <property type="entry name" value="ParBc"/>
    <property type="match status" value="1"/>
</dbReference>
<dbReference type="SMART" id="SM00470">
    <property type="entry name" value="ParB"/>
    <property type="match status" value="1"/>
</dbReference>
<dbReference type="SUPFAM" id="SSF109709">
    <property type="entry name" value="KorB DNA-binding domain-like"/>
    <property type="match status" value="1"/>
</dbReference>
<dbReference type="SUPFAM" id="SSF110849">
    <property type="entry name" value="ParB/Sulfiredoxin"/>
    <property type="match status" value="1"/>
</dbReference>
<organism>
    <name type="scientific">Escherichia coli O157:H7</name>
    <dbReference type="NCBI Taxonomy" id="83334"/>
    <lineage>
        <taxon>Bacteria</taxon>
        <taxon>Pseudomonadati</taxon>
        <taxon>Pseudomonadota</taxon>
        <taxon>Gammaproteobacteria</taxon>
        <taxon>Enterobacterales</taxon>
        <taxon>Enterobacteriaceae</taxon>
        <taxon>Escherichia</taxon>
    </lineage>
</organism>